<proteinExistence type="evidence at protein level"/>
<comment type="function">
    <text evidence="3 5 6 7 8 10">Aerial growth, conidiation, and dispersal of filamentous fungi in the environment rely upon a capability of their secreting small amphipathic proteins called hydrophobins (HPBs) with low sequence identity. Class I can self-assemble into an outermost layer of rodlet bundles on aerial cell surfaces, conferring cellular hydrophobicity that supports fungal growth, development and dispersal; whereas Class II form highly ordered films at water-air interfaces through intermolecular interactions but contribute nothing to the rodlet structure (Probable). DewA is a class I hydrophobin that contributes to spore wall hydrophobicity (PubMed:12790678, PubMed:22154865, PubMed:23137797, PubMed:24722460, PubMed:7651135).</text>
</comment>
<comment type="subunit">
    <text evidence="6 7">Forms homodimers at high concentrations, and these dimers are off-pathway to rodlet formation (PubMed:23137797). Dissociation of the dimers into monomers, with resultant exposure of the hydrophobic face, is necessary for self-assembly to form functional amyloid fibrils called rodlets. Self-assembly into fibrillar rodlets occurs spontaneously at hydrophobic:hydrophilic interfaces and the rodlets further associate laterally to form amphipathic monolayers (PubMed:23137797, PubMed:24722460).</text>
</comment>
<comment type="subcellular location">
    <subcellularLocation>
        <location evidence="4 7 8">Secreted</location>
    </subcellularLocation>
    <subcellularLocation>
        <location evidence="7 8">Spore wall</location>
    </subcellularLocation>
</comment>
<comment type="developmental stage">
    <text evidence="7 8">Accumulates preferentially during asexual sporulation.</text>
</comment>
<comment type="induction">
    <text evidence="7">Expressed after 12 to 24 hours post induction of asexual development, which correlates with the development of metulae and phialides (PubMed:24722460). Not expressed in hyphae and strongly induced during development (PubMed:24722460).</text>
</comment>
<comment type="disruption phenotype">
    <text evidence="8">Lowers the spore wall hydrophobicity.</text>
</comment>
<comment type="biotechnology">
    <text evidence="5">Hydrophobins such as dewA can be functionalized for use on orthopaedic implant surfaces by producing surfaces enhancing the adhesion of human cells such as mesenchymal stem cells (MSCs), osteoblasts, fibroblasts and chondrocytes. Improved cell adhesion potential of human cells on these surfaces is not coupled with enhanced bacterial adhesion and therefore does not introduce increased risk of bacterial infection.</text>
</comment>
<comment type="similarity">
    <text evidence="10">Belongs to the fungal hydrophobin family.</text>
</comment>
<sequence length="135" mass="13201">MRFIVSLLAFTAAATATALPASAAKNAKLATSAAFAKQAEGTTCNVGSIACCNSPAETNNDSLLSGLLGAGLLNGLSGNTGSACAKASLIDQLGLLALVDHTEEGPVCKNIVACCPEGTTNCVAVDNAGAGTKAE</sequence>
<feature type="signal peptide" evidence="2">
    <location>
        <begin position="1"/>
        <end position="18"/>
    </location>
</feature>
<feature type="chain" id="PRO_0000013507" description="Class I hydrophobin dewA">
    <location>
        <begin position="19"/>
        <end position="135"/>
    </location>
</feature>
<feature type="glycosylation site" description="N-linked (GlcNAc...) asparagine" evidence="2">
    <location>
        <position position="60"/>
    </location>
</feature>
<feature type="disulfide bond" evidence="1">
    <location>
        <begin position="44"/>
        <end position="114"/>
    </location>
</feature>
<feature type="disulfide bond" evidence="1">
    <location>
        <begin position="51"/>
        <end position="108"/>
    </location>
</feature>
<feature type="disulfide bond" evidence="1">
    <location>
        <begin position="52"/>
        <end position="84"/>
    </location>
</feature>
<feature type="disulfide bond" evidence="1">
    <location>
        <begin position="115"/>
        <end position="122"/>
    </location>
</feature>
<feature type="helix" evidence="12">
    <location>
        <begin position="34"/>
        <end position="41"/>
    </location>
</feature>
<feature type="helix" evidence="12">
    <location>
        <begin position="46"/>
        <end position="48"/>
    </location>
</feature>
<feature type="strand" evidence="12">
    <location>
        <begin position="49"/>
        <end position="52"/>
    </location>
</feature>
<feature type="helix" evidence="12">
    <location>
        <begin position="55"/>
        <end position="58"/>
    </location>
</feature>
<feature type="helix" evidence="12">
    <location>
        <begin position="64"/>
        <end position="67"/>
    </location>
</feature>
<feature type="strand" evidence="12">
    <location>
        <begin position="79"/>
        <end position="81"/>
    </location>
</feature>
<feature type="strand" evidence="12">
    <location>
        <begin position="84"/>
        <end position="86"/>
    </location>
</feature>
<feature type="helix" evidence="12">
    <location>
        <begin position="87"/>
        <end position="90"/>
    </location>
</feature>
<feature type="turn" evidence="12">
    <location>
        <begin position="91"/>
        <end position="93"/>
    </location>
</feature>
<feature type="turn" evidence="12">
    <location>
        <begin position="96"/>
        <end position="98"/>
    </location>
</feature>
<feature type="strand" evidence="12">
    <location>
        <begin position="99"/>
        <end position="102"/>
    </location>
</feature>
<feature type="strand" evidence="12">
    <location>
        <begin position="105"/>
        <end position="114"/>
    </location>
</feature>
<feature type="strand" evidence="12">
    <location>
        <begin position="117"/>
        <end position="120"/>
    </location>
</feature>
<feature type="strand" evidence="12">
    <location>
        <begin position="122"/>
        <end position="125"/>
    </location>
</feature>
<feature type="strand" evidence="12">
    <location>
        <begin position="127"/>
        <end position="129"/>
    </location>
</feature>
<dbReference type="EMBL" id="U07935">
    <property type="protein sequence ID" value="AAC13762.1"/>
    <property type="molecule type" value="Genomic_DNA"/>
</dbReference>
<dbReference type="EMBL" id="AACD01000138">
    <property type="protein sequence ID" value="EAA58809.1"/>
    <property type="molecule type" value="Genomic_DNA"/>
</dbReference>
<dbReference type="EMBL" id="BN001302">
    <property type="protein sequence ID" value="CBF73692.1"/>
    <property type="molecule type" value="Genomic_DNA"/>
</dbReference>
<dbReference type="PIR" id="S67924">
    <property type="entry name" value="S67924"/>
</dbReference>
<dbReference type="RefSeq" id="XP_681275.1">
    <property type="nucleotide sequence ID" value="XM_676183.2"/>
</dbReference>
<dbReference type="PDB" id="2LSH">
    <property type="method" value="NMR"/>
    <property type="chains" value="A=19-135"/>
</dbReference>
<dbReference type="PDBsum" id="2LSH"/>
<dbReference type="BMRB" id="P52750"/>
<dbReference type="SMR" id="P52750"/>
<dbReference type="STRING" id="227321.P52750"/>
<dbReference type="GlyCosmos" id="P52750">
    <property type="glycosylation" value="1 site, No reported glycans"/>
</dbReference>
<dbReference type="EnsemblFungi" id="CBF73692">
    <property type="protein sequence ID" value="CBF73692"/>
    <property type="gene ID" value="ANIA_08006"/>
</dbReference>
<dbReference type="GeneID" id="2869124"/>
<dbReference type="KEGG" id="ani:ANIA_08006"/>
<dbReference type="VEuPathDB" id="FungiDB:AN8006"/>
<dbReference type="HOGENOM" id="CLU_2073980_0_0_1"/>
<dbReference type="InParanoid" id="P52750"/>
<dbReference type="OMA" id="CENVIAC"/>
<dbReference type="OrthoDB" id="4468925at2759"/>
<dbReference type="EvolutionaryTrace" id="P52750"/>
<dbReference type="Proteomes" id="UP000000560">
    <property type="component" value="Chromosome II"/>
</dbReference>
<dbReference type="GO" id="GO:0005576">
    <property type="term" value="C:extracellular region"/>
    <property type="evidence" value="ECO:0007669"/>
    <property type="project" value="UniProtKB-KW"/>
</dbReference>
<dbReference type="GO" id="GO:0009277">
    <property type="term" value="C:fungal-type cell wall"/>
    <property type="evidence" value="ECO:0007669"/>
    <property type="project" value="InterPro"/>
</dbReference>
<dbReference type="GO" id="GO:0031160">
    <property type="term" value="C:spore wall"/>
    <property type="evidence" value="ECO:0000314"/>
    <property type="project" value="AspGD"/>
</dbReference>
<dbReference type="GO" id="GO:0005199">
    <property type="term" value="F:structural constituent of cell wall"/>
    <property type="evidence" value="ECO:0007669"/>
    <property type="project" value="InterPro"/>
</dbReference>
<dbReference type="GO" id="GO:0042243">
    <property type="term" value="P:asexual spore wall assembly"/>
    <property type="evidence" value="ECO:0000315"/>
    <property type="project" value="AspGD"/>
</dbReference>
<dbReference type="InterPro" id="IPR001338">
    <property type="entry name" value="Hydrophobin"/>
</dbReference>
<dbReference type="InterPro" id="IPR019778">
    <property type="entry name" value="Hydrophobin_CS"/>
</dbReference>
<dbReference type="Pfam" id="PF01185">
    <property type="entry name" value="Hydrophobin"/>
    <property type="match status" value="1"/>
</dbReference>
<dbReference type="SMART" id="SM00075">
    <property type="entry name" value="HYDRO"/>
    <property type="match status" value="1"/>
</dbReference>
<dbReference type="PROSITE" id="PS00956">
    <property type="entry name" value="HYDROPHOBIN"/>
    <property type="match status" value="1"/>
</dbReference>
<keyword id="KW-0002">3D-structure</keyword>
<keyword id="KW-0961">Cell wall biogenesis/degradation</keyword>
<keyword id="KW-0183">Conidiation</keyword>
<keyword id="KW-1015">Disulfide bond</keyword>
<keyword id="KW-0325">Glycoprotein</keyword>
<keyword id="KW-1185">Reference proteome</keyword>
<keyword id="KW-0964">Secreted</keyword>
<keyword id="KW-0732">Signal</keyword>
<keyword id="KW-0749">Sporulation</keyword>
<organism>
    <name type="scientific">Emericella nidulans (strain FGSC A4 / ATCC 38163 / CBS 112.46 / NRRL 194 / M139)</name>
    <name type="common">Aspergillus nidulans</name>
    <dbReference type="NCBI Taxonomy" id="227321"/>
    <lineage>
        <taxon>Eukaryota</taxon>
        <taxon>Fungi</taxon>
        <taxon>Dikarya</taxon>
        <taxon>Ascomycota</taxon>
        <taxon>Pezizomycotina</taxon>
        <taxon>Eurotiomycetes</taxon>
        <taxon>Eurotiomycetidae</taxon>
        <taxon>Eurotiales</taxon>
        <taxon>Aspergillaceae</taxon>
        <taxon>Aspergillus</taxon>
        <taxon>Aspergillus subgen. Nidulantes</taxon>
    </lineage>
</organism>
<protein>
    <recommendedName>
        <fullName evidence="9">Class I hydrophobin dewA</fullName>
    </recommendedName>
    <alternativeName>
        <fullName evidence="9">Spore wall hydrophobin dewA</fullName>
    </alternativeName>
</protein>
<reference key="1">
    <citation type="journal article" date="1995" name="Mol. Microbiol.">
        <title>dewA encodes a fungal hydrophobin component of the Aspergillus spore wall.</title>
        <authorList>
            <person name="Stringer M.A."/>
            <person name="Timberlake W.E."/>
        </authorList>
    </citation>
    <scope>NUCLEOTIDE SEQUENCE [GENOMIC DNA]</scope>
    <scope>FUNCTION</scope>
    <scope>DISRUPTION PHENOTYPE</scope>
    <scope>SUBCELLULAR LOCATION</scope>
    <scope>DEVELOPMENTAL STAGE</scope>
    <source>
        <strain>FGSC A4 / ATCC 38163 / CBS 112.46 / NRRL 194 / M139</strain>
    </source>
</reference>
<reference key="2">
    <citation type="journal article" date="2005" name="Nature">
        <title>Sequencing of Aspergillus nidulans and comparative analysis with A. fumigatus and A. oryzae.</title>
        <authorList>
            <person name="Galagan J.E."/>
            <person name="Calvo S.E."/>
            <person name="Cuomo C."/>
            <person name="Ma L.-J."/>
            <person name="Wortman J.R."/>
            <person name="Batzoglou S."/>
            <person name="Lee S.-I."/>
            <person name="Bastuerkmen M."/>
            <person name="Spevak C.C."/>
            <person name="Clutterbuck J."/>
            <person name="Kapitonov V."/>
            <person name="Jurka J."/>
            <person name="Scazzocchio C."/>
            <person name="Farman M.L."/>
            <person name="Butler J."/>
            <person name="Purcell S."/>
            <person name="Harris S."/>
            <person name="Braus G.H."/>
            <person name="Draht O."/>
            <person name="Busch S."/>
            <person name="D'Enfert C."/>
            <person name="Bouchier C."/>
            <person name="Goldman G.H."/>
            <person name="Bell-Pedersen D."/>
            <person name="Griffiths-Jones S."/>
            <person name="Doonan J.H."/>
            <person name="Yu J."/>
            <person name="Vienken K."/>
            <person name="Pain A."/>
            <person name="Freitag M."/>
            <person name="Selker E.U."/>
            <person name="Archer D.B."/>
            <person name="Penalva M.A."/>
            <person name="Oakley B.R."/>
            <person name="Momany M."/>
            <person name="Tanaka T."/>
            <person name="Kumagai T."/>
            <person name="Asai K."/>
            <person name="Machida M."/>
            <person name="Nierman W.C."/>
            <person name="Denning D.W."/>
            <person name="Caddick M.X."/>
            <person name="Hynes M."/>
            <person name="Paoletti M."/>
            <person name="Fischer R."/>
            <person name="Miller B.L."/>
            <person name="Dyer P.S."/>
            <person name="Sachs M.S."/>
            <person name="Osmani S.A."/>
            <person name="Birren B.W."/>
        </authorList>
    </citation>
    <scope>NUCLEOTIDE SEQUENCE [LARGE SCALE GENOMIC DNA]</scope>
    <source>
        <strain>FGSC A4 / ATCC 38163 / CBS 112.46 / NRRL 194 / M139</strain>
    </source>
</reference>
<reference key="3">
    <citation type="journal article" date="2009" name="Fungal Genet. Biol.">
        <title>The 2008 update of the Aspergillus nidulans genome annotation: a community effort.</title>
        <authorList>
            <person name="Wortman J.R."/>
            <person name="Gilsenan J.M."/>
            <person name="Joardar V."/>
            <person name="Deegan J."/>
            <person name="Clutterbuck J."/>
            <person name="Andersen M.R."/>
            <person name="Archer D."/>
            <person name="Bencina M."/>
            <person name="Braus G."/>
            <person name="Coutinho P."/>
            <person name="von Dohren H."/>
            <person name="Doonan J."/>
            <person name="Driessen A.J."/>
            <person name="Durek P."/>
            <person name="Espeso E."/>
            <person name="Fekete E."/>
            <person name="Flipphi M."/>
            <person name="Estrada C.G."/>
            <person name="Geysens S."/>
            <person name="Goldman G."/>
            <person name="de Groot P.W."/>
            <person name="Hansen K."/>
            <person name="Harris S.D."/>
            <person name="Heinekamp T."/>
            <person name="Helmstaedt K."/>
            <person name="Henrissat B."/>
            <person name="Hofmann G."/>
            <person name="Homan T."/>
            <person name="Horio T."/>
            <person name="Horiuchi H."/>
            <person name="James S."/>
            <person name="Jones M."/>
            <person name="Karaffa L."/>
            <person name="Karanyi Z."/>
            <person name="Kato M."/>
            <person name="Keller N."/>
            <person name="Kelly D.E."/>
            <person name="Kiel J.A."/>
            <person name="Kim J.M."/>
            <person name="van der Klei I.J."/>
            <person name="Klis F.M."/>
            <person name="Kovalchuk A."/>
            <person name="Krasevec N."/>
            <person name="Kubicek C.P."/>
            <person name="Liu B."/>
            <person name="Maccabe A."/>
            <person name="Meyer V."/>
            <person name="Mirabito P."/>
            <person name="Miskei M."/>
            <person name="Mos M."/>
            <person name="Mullins J."/>
            <person name="Nelson D.R."/>
            <person name="Nielsen J."/>
            <person name="Oakley B.R."/>
            <person name="Osmani S.A."/>
            <person name="Pakula T."/>
            <person name="Paszewski A."/>
            <person name="Paulsen I."/>
            <person name="Pilsyk S."/>
            <person name="Pocsi I."/>
            <person name="Punt P.J."/>
            <person name="Ram A.F."/>
            <person name="Ren Q."/>
            <person name="Robellet X."/>
            <person name="Robson G."/>
            <person name="Seiboth B."/>
            <person name="van Solingen P."/>
            <person name="Specht T."/>
            <person name="Sun J."/>
            <person name="Taheri-Talesh N."/>
            <person name="Takeshita N."/>
            <person name="Ussery D."/>
            <person name="vanKuyk P.A."/>
            <person name="Visser H."/>
            <person name="van de Vondervoort P.J."/>
            <person name="de Vries R.P."/>
            <person name="Walton J."/>
            <person name="Xiang X."/>
            <person name="Xiong Y."/>
            <person name="Zeng A.P."/>
            <person name="Brandt B.W."/>
            <person name="Cornell M.J."/>
            <person name="van den Hondel C.A."/>
            <person name="Visser J."/>
            <person name="Oliver S.G."/>
            <person name="Turner G."/>
        </authorList>
    </citation>
    <scope>GENOME REANNOTATION</scope>
    <source>
        <strain>FGSC A4 / ATCC 38163 / CBS 112.46 / NRRL 194 / M139</strain>
    </source>
</reference>
<reference key="4">
    <citation type="journal article" date="2003" name="Biotechnol. Prog.">
        <title>Surface hydrophobicity of Aspergillus nidulans conidiospores and its role in pellet formation.</title>
        <authorList>
            <person name="Dynesen J."/>
            <person name="Nielsen J."/>
        </authorList>
    </citation>
    <scope>FUNCTION</scope>
</reference>
<reference key="5">
    <citation type="journal article" date="2010" name="Appl. Microbiol. Biotechnol.">
        <title>Recombinant production of an Aspergillus nidulans class I hydrophobin (DewA) in Hypocrea jecorina (Trichoderma reesei) is promoter-dependent.</title>
        <authorList>
            <person name="Schmoll M."/>
            <person name="Seibel C."/>
            <person name="Kotlowski C."/>
            <person name="Woellert Genannt Vendt F."/>
            <person name="Liebmann B."/>
            <person name="Kubicek C.P."/>
        </authorList>
    </citation>
    <scope>SUBCELLULAR LOCATION</scope>
</reference>
<reference key="6">
    <citation type="journal article" date="2012" name="Acta Biomater.">
        <title>Engineering hydrophobin DewA to generate surfaces that enhance adhesion of human but not bacterial cells.</title>
        <authorList>
            <person name="Boeuf S."/>
            <person name="Throm T."/>
            <person name="Gutt B."/>
            <person name="Strunk T."/>
            <person name="Hoffmann M."/>
            <person name="Seebach E."/>
            <person name="Muehlberg L."/>
            <person name="Brocher J."/>
            <person name="Gotterbarm T."/>
            <person name="Wenzel W."/>
            <person name="Fischer R."/>
            <person name="Richter W."/>
        </authorList>
    </citation>
    <scope>FUNCTION</scope>
    <scope>BIOTECHNOLOGY</scope>
</reference>
<reference key="7">
    <citation type="journal article" date="2014" name="PLoS ONE">
        <title>Six hydrophobins are involved in hydrophobin rodlet formation in Aspergillus nidulans and contribute to hydrophobicity of the spore surface.</title>
        <authorList>
            <person name="Gruenbacher A."/>
            <person name="Throm T."/>
            <person name="Seidel C."/>
            <person name="Gutt B."/>
            <person name="Roehrig J."/>
            <person name="Strunk T."/>
            <person name="Vincze P."/>
            <person name="Walheim S."/>
            <person name="Schimmel T."/>
            <person name="Wenzel W."/>
            <person name="Fischer R."/>
        </authorList>
    </citation>
    <scope>FUNCTION</scope>
    <scope>DEVELOPMENTAL STAGE</scope>
    <scope>SUBUNIT</scope>
    <scope>INDUCTION</scope>
    <scope>SUBCELLULAR LOCATION</scope>
</reference>
<reference key="8">
    <citation type="journal article" date="2021" name="Int. J. Mol. Sci.">
        <title>Soluble Expression and Efficient Purification of Recombinant Class I Hydrophobin DewA.</title>
        <authorList>
            <person name="Ahn S.O."/>
            <person name="Lim H.D."/>
            <person name="You S.H."/>
            <person name="Cheong D.E."/>
            <person name="Kim G.J."/>
        </authorList>
    </citation>
    <scope>PURIFICATION</scope>
</reference>
<reference evidence="11" key="9">
    <citation type="journal article" date="2013" name="J. Mol. Biol.">
        <title>Analysis of the structure and conformational states of DewA gives insight into the assembly of the fungal hydrophobins.</title>
        <authorList>
            <person name="Morris V.K."/>
            <person name="Kwan A.H."/>
            <person name="Sunde M."/>
        </authorList>
    </citation>
    <scope>STRUCTURE BY NMR OF 19-135</scope>
    <scope>SUBUNIT</scope>
    <scope>FUNCTION</scope>
</reference>
<name>DEWA_EMENI</name>
<gene>
    <name evidence="9" type="primary">dewA</name>
    <name type="ORF">AN8006</name>
</gene>
<evidence type="ECO:0000250" key="1">
    <source>
        <dbReference type="UniProtKB" id="Q04571"/>
    </source>
</evidence>
<evidence type="ECO:0000255" key="2"/>
<evidence type="ECO:0000269" key="3">
    <source>
    </source>
</evidence>
<evidence type="ECO:0000269" key="4">
    <source>
    </source>
</evidence>
<evidence type="ECO:0000269" key="5">
    <source>
    </source>
</evidence>
<evidence type="ECO:0000269" key="6">
    <source>
    </source>
</evidence>
<evidence type="ECO:0000269" key="7">
    <source>
    </source>
</evidence>
<evidence type="ECO:0000269" key="8">
    <source>
    </source>
</evidence>
<evidence type="ECO:0000303" key="9">
    <source>
    </source>
</evidence>
<evidence type="ECO:0000305" key="10"/>
<evidence type="ECO:0007744" key="11">
    <source>
        <dbReference type="PDB" id="2LSH"/>
    </source>
</evidence>
<evidence type="ECO:0007829" key="12">
    <source>
        <dbReference type="PDB" id="2LSH"/>
    </source>
</evidence>
<accession>P52750</accession>
<accession>C8V5M7</accession>
<accession>Q5AUM4</accession>